<dbReference type="EC" id="2.1.1.163" evidence="1"/>
<dbReference type="EC" id="2.1.1.201" evidence="1"/>
<dbReference type="EMBL" id="BX640450">
    <property type="protein sequence ID" value="CAE34831.1"/>
    <property type="molecule type" value="Genomic_DNA"/>
</dbReference>
<dbReference type="RefSeq" id="WP_003815111.1">
    <property type="nucleotide sequence ID" value="NC_002927.3"/>
</dbReference>
<dbReference type="SMR" id="Q7WF12"/>
<dbReference type="GeneID" id="93205794"/>
<dbReference type="KEGG" id="bbr:BB4468"/>
<dbReference type="eggNOG" id="COG2226">
    <property type="taxonomic scope" value="Bacteria"/>
</dbReference>
<dbReference type="HOGENOM" id="CLU_037990_0_0_4"/>
<dbReference type="UniPathway" id="UPA00079">
    <property type="reaction ID" value="UER00169"/>
</dbReference>
<dbReference type="UniPathway" id="UPA00232"/>
<dbReference type="Proteomes" id="UP000001027">
    <property type="component" value="Chromosome"/>
</dbReference>
<dbReference type="GO" id="GO:0008425">
    <property type="term" value="F:2-methoxy-6-polyprenyl-1,4-benzoquinol methyltransferase activity"/>
    <property type="evidence" value="ECO:0007669"/>
    <property type="project" value="UniProtKB-UniRule"/>
</dbReference>
<dbReference type="GO" id="GO:0043770">
    <property type="term" value="F:demethylmenaquinone methyltransferase activity"/>
    <property type="evidence" value="ECO:0007669"/>
    <property type="project" value="UniProtKB-UniRule"/>
</dbReference>
<dbReference type="GO" id="GO:0009060">
    <property type="term" value="P:aerobic respiration"/>
    <property type="evidence" value="ECO:0007669"/>
    <property type="project" value="UniProtKB-UniRule"/>
</dbReference>
<dbReference type="GO" id="GO:0009234">
    <property type="term" value="P:menaquinone biosynthetic process"/>
    <property type="evidence" value="ECO:0007669"/>
    <property type="project" value="UniProtKB-UniRule"/>
</dbReference>
<dbReference type="GO" id="GO:0032259">
    <property type="term" value="P:methylation"/>
    <property type="evidence" value="ECO:0007669"/>
    <property type="project" value="UniProtKB-KW"/>
</dbReference>
<dbReference type="CDD" id="cd02440">
    <property type="entry name" value="AdoMet_MTases"/>
    <property type="match status" value="1"/>
</dbReference>
<dbReference type="Gene3D" id="3.40.50.150">
    <property type="entry name" value="Vaccinia Virus protein VP39"/>
    <property type="match status" value="1"/>
</dbReference>
<dbReference type="HAMAP" id="MF_01813">
    <property type="entry name" value="MenG_UbiE_methyltr"/>
    <property type="match status" value="1"/>
</dbReference>
<dbReference type="InterPro" id="IPR029063">
    <property type="entry name" value="SAM-dependent_MTases_sf"/>
</dbReference>
<dbReference type="InterPro" id="IPR004033">
    <property type="entry name" value="UbiE/COQ5_MeTrFase"/>
</dbReference>
<dbReference type="InterPro" id="IPR023576">
    <property type="entry name" value="UbiE/COQ5_MeTrFase_CS"/>
</dbReference>
<dbReference type="NCBIfam" id="TIGR01934">
    <property type="entry name" value="MenG_MenH_UbiE"/>
    <property type="match status" value="1"/>
</dbReference>
<dbReference type="NCBIfam" id="NF001240">
    <property type="entry name" value="PRK00216.1-1"/>
    <property type="match status" value="1"/>
</dbReference>
<dbReference type="PANTHER" id="PTHR43591:SF24">
    <property type="entry name" value="2-METHOXY-6-POLYPRENYL-1,4-BENZOQUINOL METHYLASE, MITOCHONDRIAL"/>
    <property type="match status" value="1"/>
</dbReference>
<dbReference type="PANTHER" id="PTHR43591">
    <property type="entry name" value="METHYLTRANSFERASE"/>
    <property type="match status" value="1"/>
</dbReference>
<dbReference type="Pfam" id="PF01209">
    <property type="entry name" value="Ubie_methyltran"/>
    <property type="match status" value="1"/>
</dbReference>
<dbReference type="SUPFAM" id="SSF53335">
    <property type="entry name" value="S-adenosyl-L-methionine-dependent methyltransferases"/>
    <property type="match status" value="1"/>
</dbReference>
<dbReference type="PROSITE" id="PS51608">
    <property type="entry name" value="SAM_MT_UBIE"/>
    <property type="match status" value="1"/>
</dbReference>
<dbReference type="PROSITE" id="PS01183">
    <property type="entry name" value="UBIE_1"/>
    <property type="match status" value="1"/>
</dbReference>
<dbReference type="PROSITE" id="PS01184">
    <property type="entry name" value="UBIE_2"/>
    <property type="match status" value="1"/>
</dbReference>
<name>UBIE_BORBR</name>
<feature type="chain" id="PRO_0000193252" description="Ubiquinone/menaquinone biosynthesis C-methyltransferase UbiE">
    <location>
        <begin position="1"/>
        <end position="258"/>
    </location>
</feature>
<feature type="binding site" evidence="1">
    <location>
        <position position="83"/>
    </location>
    <ligand>
        <name>S-adenosyl-L-methionine</name>
        <dbReference type="ChEBI" id="CHEBI:59789"/>
    </ligand>
</feature>
<feature type="binding site" evidence="1">
    <location>
        <position position="104"/>
    </location>
    <ligand>
        <name>S-adenosyl-L-methionine</name>
        <dbReference type="ChEBI" id="CHEBI:59789"/>
    </ligand>
</feature>
<feature type="binding site" evidence="1">
    <location>
        <begin position="130"/>
        <end position="131"/>
    </location>
    <ligand>
        <name>S-adenosyl-L-methionine</name>
        <dbReference type="ChEBI" id="CHEBI:59789"/>
    </ligand>
</feature>
<accession>Q7WF12</accession>
<gene>
    <name evidence="1" type="primary">ubiE</name>
    <name type="ordered locus">BB4468</name>
</gene>
<keyword id="KW-0474">Menaquinone biosynthesis</keyword>
<keyword id="KW-0489">Methyltransferase</keyword>
<keyword id="KW-0949">S-adenosyl-L-methionine</keyword>
<keyword id="KW-0808">Transferase</keyword>
<keyword id="KW-0831">Ubiquinone biosynthesis</keyword>
<proteinExistence type="inferred from homology"/>
<evidence type="ECO:0000255" key="1">
    <source>
        <dbReference type="HAMAP-Rule" id="MF_01813"/>
    </source>
</evidence>
<reference key="1">
    <citation type="journal article" date="2003" name="Nat. Genet.">
        <title>Comparative analysis of the genome sequences of Bordetella pertussis, Bordetella parapertussis and Bordetella bronchiseptica.</title>
        <authorList>
            <person name="Parkhill J."/>
            <person name="Sebaihia M."/>
            <person name="Preston A."/>
            <person name="Murphy L.D."/>
            <person name="Thomson N.R."/>
            <person name="Harris D.E."/>
            <person name="Holden M.T.G."/>
            <person name="Churcher C.M."/>
            <person name="Bentley S.D."/>
            <person name="Mungall K.L."/>
            <person name="Cerdeno-Tarraga A.-M."/>
            <person name="Temple L."/>
            <person name="James K.D."/>
            <person name="Harris B."/>
            <person name="Quail M.A."/>
            <person name="Achtman M."/>
            <person name="Atkin R."/>
            <person name="Baker S."/>
            <person name="Basham D."/>
            <person name="Bason N."/>
            <person name="Cherevach I."/>
            <person name="Chillingworth T."/>
            <person name="Collins M."/>
            <person name="Cronin A."/>
            <person name="Davis P."/>
            <person name="Doggett J."/>
            <person name="Feltwell T."/>
            <person name="Goble A."/>
            <person name="Hamlin N."/>
            <person name="Hauser H."/>
            <person name="Holroyd S."/>
            <person name="Jagels K."/>
            <person name="Leather S."/>
            <person name="Moule S."/>
            <person name="Norberczak H."/>
            <person name="O'Neil S."/>
            <person name="Ormond D."/>
            <person name="Price C."/>
            <person name="Rabbinowitsch E."/>
            <person name="Rutter S."/>
            <person name="Sanders M."/>
            <person name="Saunders D."/>
            <person name="Seeger K."/>
            <person name="Sharp S."/>
            <person name="Simmonds M."/>
            <person name="Skelton J."/>
            <person name="Squares R."/>
            <person name="Squares S."/>
            <person name="Stevens K."/>
            <person name="Unwin L."/>
            <person name="Whitehead S."/>
            <person name="Barrell B.G."/>
            <person name="Maskell D.J."/>
        </authorList>
    </citation>
    <scope>NUCLEOTIDE SEQUENCE [LARGE SCALE GENOMIC DNA]</scope>
    <source>
        <strain>ATCC BAA-588 / NCTC 13252 / RB50</strain>
    </source>
</reference>
<protein>
    <recommendedName>
        <fullName evidence="1">Ubiquinone/menaquinone biosynthesis C-methyltransferase UbiE</fullName>
        <ecNumber evidence="1">2.1.1.163</ecNumber>
        <ecNumber evidence="1">2.1.1.201</ecNumber>
    </recommendedName>
    <alternativeName>
        <fullName evidence="1">2-methoxy-6-polyprenyl-1,4-benzoquinol methylase</fullName>
    </alternativeName>
    <alternativeName>
        <fullName evidence="1">Demethylmenaquinone methyltransferase</fullName>
    </alternativeName>
</protein>
<comment type="function">
    <text evidence="1">Methyltransferase required for the conversion of demethylmenaquinol (DMKH2) to menaquinol (MKH2) and the conversion of 2-polyprenyl-6-methoxy-1,4-benzoquinol (DDMQH2) to 2-polyprenyl-3-methyl-6-methoxy-1,4-benzoquinol (DMQH2).</text>
</comment>
<comment type="catalytic activity">
    <reaction evidence="1">
        <text>a 2-demethylmenaquinol + S-adenosyl-L-methionine = a menaquinol + S-adenosyl-L-homocysteine + H(+)</text>
        <dbReference type="Rhea" id="RHEA:42640"/>
        <dbReference type="Rhea" id="RHEA-COMP:9539"/>
        <dbReference type="Rhea" id="RHEA-COMP:9563"/>
        <dbReference type="ChEBI" id="CHEBI:15378"/>
        <dbReference type="ChEBI" id="CHEBI:18151"/>
        <dbReference type="ChEBI" id="CHEBI:55437"/>
        <dbReference type="ChEBI" id="CHEBI:57856"/>
        <dbReference type="ChEBI" id="CHEBI:59789"/>
        <dbReference type="EC" id="2.1.1.163"/>
    </reaction>
</comment>
<comment type="catalytic activity">
    <reaction evidence="1">
        <text>a 2-methoxy-6-(all-trans-polyprenyl)benzene-1,4-diol + S-adenosyl-L-methionine = a 5-methoxy-2-methyl-3-(all-trans-polyprenyl)benzene-1,4-diol + S-adenosyl-L-homocysteine + H(+)</text>
        <dbReference type="Rhea" id="RHEA:28286"/>
        <dbReference type="Rhea" id="RHEA-COMP:10858"/>
        <dbReference type="Rhea" id="RHEA-COMP:10859"/>
        <dbReference type="ChEBI" id="CHEBI:15378"/>
        <dbReference type="ChEBI" id="CHEBI:57856"/>
        <dbReference type="ChEBI" id="CHEBI:59789"/>
        <dbReference type="ChEBI" id="CHEBI:84166"/>
        <dbReference type="ChEBI" id="CHEBI:84167"/>
        <dbReference type="EC" id="2.1.1.201"/>
    </reaction>
</comment>
<comment type="pathway">
    <text evidence="1">Quinol/quinone metabolism; menaquinone biosynthesis; menaquinol from 1,4-dihydroxy-2-naphthoate: step 2/2.</text>
</comment>
<comment type="pathway">
    <text evidence="1">Cofactor biosynthesis; ubiquinone biosynthesis.</text>
</comment>
<comment type="similarity">
    <text evidence="1">Belongs to the class I-like SAM-binding methyltransferase superfamily. MenG/UbiE family.</text>
</comment>
<organism>
    <name type="scientific">Bordetella bronchiseptica (strain ATCC BAA-588 / NCTC 13252 / RB50)</name>
    <name type="common">Alcaligenes bronchisepticus</name>
    <dbReference type="NCBI Taxonomy" id="257310"/>
    <lineage>
        <taxon>Bacteria</taxon>
        <taxon>Pseudomonadati</taxon>
        <taxon>Pseudomonadota</taxon>
        <taxon>Betaproteobacteria</taxon>
        <taxon>Burkholderiales</taxon>
        <taxon>Alcaligenaceae</taxon>
        <taxon>Bordetella</taxon>
    </lineage>
</organism>
<sequence length="258" mass="28477">MQTPHSQPESAPQGEQSTHFGFQSVPEADKARKVAEVFHSVASRYDVMNDLMSAGLHRVWKAFTIGRAAVRPGMKVLDIAGGTGDLARAFAKRAGPSGEVWLTDINESMLRVGRDRLTDSGLLVPTAVCDAERLPFPSQYFDRVSVAFGLRNMTHKDRALAEMTRVLKPGGKLLVLEFSRVAKPLAPAYDWYSFNVLPWMGKKVANDEASYRYLAESIRMHPDQETLAGMLRDAGLDRVQYFNLTAGVAALHEGVRLG</sequence>